<proteinExistence type="evidence at protein level"/>
<feature type="chain" id="PRO_0000349383" description="E3 ubiquitin-protein ligase NEURL1B">
    <location>
        <begin position="1"/>
        <end position="546"/>
    </location>
</feature>
<feature type="domain" description="NHR 1" evidence="3">
    <location>
        <begin position="38"/>
        <end position="194"/>
    </location>
</feature>
<feature type="domain" description="NHR 2" evidence="3">
    <location>
        <begin position="270"/>
        <end position="424"/>
    </location>
</feature>
<feature type="zinc finger region" description="RING-type" evidence="2">
    <location>
        <begin position="494"/>
        <end position="534"/>
    </location>
</feature>
<feature type="region of interest" description="Disordered" evidence="4">
    <location>
        <begin position="429"/>
        <end position="490"/>
    </location>
</feature>
<feature type="compositionally biased region" description="Low complexity" evidence="4">
    <location>
        <begin position="457"/>
        <end position="471"/>
    </location>
</feature>
<feature type="modified residue" description="Phosphothreonine" evidence="1">
    <location>
        <position position="199"/>
    </location>
</feature>
<gene>
    <name type="primary">Neurl1b</name>
    <name type="synonym">Neurl2</name>
    <name type="synonym">Neurl3</name>
</gene>
<keyword id="KW-0963">Cytoplasm</keyword>
<keyword id="KW-0479">Metal-binding</keyword>
<keyword id="KW-0914">Notch signaling pathway</keyword>
<keyword id="KW-0597">Phosphoprotein</keyword>
<keyword id="KW-1185">Reference proteome</keyword>
<keyword id="KW-0677">Repeat</keyword>
<keyword id="KW-0808">Transferase</keyword>
<keyword id="KW-0833">Ubl conjugation pathway</keyword>
<keyword id="KW-0862">Zinc</keyword>
<keyword id="KW-0863">Zinc-finger</keyword>
<accession>Q0MW30</accession>
<accession>C9DQJ8</accession>
<reference key="1">
    <citation type="journal article" date="2006" name="J. Biol. Chem.">
        <title>Neuralized-2 regulates a Notch ligand in cooperation with Mind bomb-1.</title>
        <authorList>
            <person name="Song R."/>
            <person name="Koo B.-K."/>
            <person name="Yoon K.-J."/>
            <person name="Yoon M.-J."/>
            <person name="Yoo K.-W."/>
            <person name="Kim H.-T."/>
            <person name="Oh H.-J."/>
            <person name="Kim Y.-Y."/>
            <person name="Han J.-K."/>
            <person name="Kim C.-H."/>
            <person name="Kong Y.-Y."/>
        </authorList>
    </citation>
    <scope>NUCLEOTIDE SEQUENCE [MRNA]</scope>
    <scope>FUNCTION</scope>
    <scope>TISSUE SPECIFICITY</scope>
    <source>
        <strain>C57BL/6J</strain>
    </source>
</reference>
<reference key="2">
    <citation type="journal article" date="2009" name="Biochem. Biophys. Res. Commun.">
        <title>Neuralized-2: Expression in human and rodents and interaction with Delta-like ligands.</title>
        <authorList>
            <person name="Rullinkov G."/>
            <person name="Tamme R."/>
            <person name="Sarapuu A."/>
            <person name="Lauren J."/>
            <person name="Sepp M."/>
            <person name="Palm K."/>
            <person name="Timmusk T."/>
        </authorList>
    </citation>
    <scope>NUCLEOTIDE SEQUENCE [MRNA]</scope>
    <scope>FUNCTION</scope>
    <scope>SUBCELLULAR LOCATION</scope>
    <scope>INTERACTION WITH DLL1 AND DLL4</scope>
</reference>
<protein>
    <recommendedName>
        <fullName>E3 ubiquitin-protein ligase NEURL1B</fullName>
        <ecNumber>2.3.2.27</ecNumber>
    </recommendedName>
    <alternativeName>
        <fullName>Neuralized-2</fullName>
        <shortName>NEUR2</shortName>
    </alternativeName>
    <alternativeName>
        <fullName>Neuralized-like protein 1B</fullName>
    </alternativeName>
    <alternativeName>
        <fullName>Neuralized-like protein 2</fullName>
    </alternativeName>
    <alternativeName>
        <fullName>Neuralized-like protein 3</fullName>
    </alternativeName>
    <alternativeName>
        <fullName evidence="7">RING-type E3 ubiquitin transferase NEURL1B</fullName>
    </alternativeName>
</protein>
<sequence length="546" mass="58527">MGNTVHRTLPDSSPPARLLATRPCYGPGPERRAVLGEAPRFHAQAKGKNVRLDGHSRRATRRNSFCNGVTFTQRPIRLYEQVRLRLVAVRPGWSGALRFGFTAHDPSLMSAQDIPKYACPDLVTRPGYWAKALPENLALRDTVLAYWADRHGRVFYSVNDGEPVLFHCGVAVGGPLWALIDVYGITDEVQLLESTFADTLTPLRLGQARLSACPPPGSHDAANFDNNELENNQVVAKLGHLALGRPDAAVPCVARERPRPASSPALLDAELRFHATRGPDVSLSADRRLACAPRPDGGRTLVFSERPLRPGESLCVEVGRPGLAAPAAVAFGITSCDPGALRPSELPADPAALLDRKEYWVVARAGPVPSGGDALSFTLRPGGDVLLAVNGRPRGRLLCVDTSQALWAFFAVRGGVAGQLRLLGTLQSSSETMTPSGSFSGSQDDSDSDMTFGVNQSSSASESSLVTAPSSPLSPPVSPAFSAPEPTGSRNGECTVCFDSEVDTVIYTCGHMCLCHGCGLRLRRQARACCPICRRPIKDVIKIYRP</sequence>
<name>NEU1B_MOUSE</name>
<organism>
    <name type="scientific">Mus musculus</name>
    <name type="common">Mouse</name>
    <dbReference type="NCBI Taxonomy" id="10090"/>
    <lineage>
        <taxon>Eukaryota</taxon>
        <taxon>Metazoa</taxon>
        <taxon>Chordata</taxon>
        <taxon>Craniata</taxon>
        <taxon>Vertebrata</taxon>
        <taxon>Euteleostomi</taxon>
        <taxon>Mammalia</taxon>
        <taxon>Eutheria</taxon>
        <taxon>Euarchontoglires</taxon>
        <taxon>Glires</taxon>
        <taxon>Rodentia</taxon>
        <taxon>Myomorpha</taxon>
        <taxon>Muroidea</taxon>
        <taxon>Muridae</taxon>
        <taxon>Murinae</taxon>
        <taxon>Mus</taxon>
        <taxon>Mus</taxon>
    </lineage>
</organism>
<comment type="function">
    <text evidence="5 6">E3 ubiquitin-protein ligase involved in regulation of the Notch pathway through influencing the stability and activity of several Notch ligands.</text>
</comment>
<comment type="catalytic activity">
    <reaction>
        <text>S-ubiquitinyl-[E2 ubiquitin-conjugating enzyme]-L-cysteine + [acceptor protein]-L-lysine = [E2 ubiquitin-conjugating enzyme]-L-cysteine + N(6)-ubiquitinyl-[acceptor protein]-L-lysine.</text>
        <dbReference type="EC" id="2.3.2.27"/>
    </reaction>
</comment>
<comment type="pathway">
    <text>Protein modification; protein ubiquitination.</text>
</comment>
<comment type="subunit">
    <text evidence="6">Interacts with DLL1 and DLL4.</text>
</comment>
<comment type="subcellular location">
    <subcellularLocation>
        <location evidence="6">Cytoplasm</location>
    </subcellularLocation>
</comment>
<comment type="tissue specificity">
    <text evidence="5">Expressed in the limb buds and dorsal root ganglia. Expressed in brain and kidney and at low levels in the heart.</text>
</comment>
<evidence type="ECO:0000250" key="1">
    <source>
        <dbReference type="UniProtKB" id="A8MQ27"/>
    </source>
</evidence>
<evidence type="ECO:0000255" key="2">
    <source>
        <dbReference type="PROSITE-ProRule" id="PRU00175"/>
    </source>
</evidence>
<evidence type="ECO:0000255" key="3">
    <source>
        <dbReference type="PROSITE-ProRule" id="PRU00400"/>
    </source>
</evidence>
<evidence type="ECO:0000256" key="4">
    <source>
        <dbReference type="SAM" id="MobiDB-lite"/>
    </source>
</evidence>
<evidence type="ECO:0000269" key="5">
    <source>
    </source>
</evidence>
<evidence type="ECO:0000269" key="6">
    <source>
    </source>
</evidence>
<evidence type="ECO:0000305" key="7"/>
<dbReference type="EC" id="2.3.2.27"/>
<dbReference type="EMBL" id="DQ839448">
    <property type="protein sequence ID" value="ABH10575.1"/>
    <property type="molecule type" value="mRNA"/>
</dbReference>
<dbReference type="EMBL" id="GQ414760">
    <property type="protein sequence ID" value="ACV53566.1"/>
    <property type="molecule type" value="mRNA"/>
</dbReference>
<dbReference type="CCDS" id="CCDS37513.1"/>
<dbReference type="RefSeq" id="NP_001075125.1">
    <property type="nucleotide sequence ID" value="NM_001081656.3"/>
</dbReference>
<dbReference type="SMR" id="Q0MW30"/>
<dbReference type="BioGRID" id="232152">
    <property type="interactions" value="1"/>
</dbReference>
<dbReference type="FunCoup" id="Q0MW30">
    <property type="interactions" value="568"/>
</dbReference>
<dbReference type="STRING" id="10090.ENSMUSP00000051481"/>
<dbReference type="iPTMnet" id="Q0MW30"/>
<dbReference type="PhosphoSitePlus" id="Q0MW30"/>
<dbReference type="PaxDb" id="10090-ENSMUSP00000051481"/>
<dbReference type="ProteomicsDB" id="252814"/>
<dbReference type="Antibodypedia" id="49674">
    <property type="antibodies" value="42 antibodies from 11 providers"/>
</dbReference>
<dbReference type="Ensembl" id="ENSMUST00000053020.8">
    <property type="protein sequence ID" value="ENSMUSP00000051481.7"/>
    <property type="gene ID" value="ENSMUSG00000034413.15"/>
</dbReference>
<dbReference type="GeneID" id="240055"/>
<dbReference type="KEGG" id="mmu:240055"/>
<dbReference type="UCSC" id="uc008bed.2">
    <property type="organism name" value="mouse"/>
</dbReference>
<dbReference type="AGR" id="MGI:3643092"/>
<dbReference type="CTD" id="54492"/>
<dbReference type="MGI" id="MGI:3643092">
    <property type="gene designation" value="Neurl1b"/>
</dbReference>
<dbReference type="VEuPathDB" id="HostDB:ENSMUSG00000034413"/>
<dbReference type="eggNOG" id="KOG4172">
    <property type="taxonomic scope" value="Eukaryota"/>
</dbReference>
<dbReference type="eggNOG" id="KOG4625">
    <property type="taxonomic scope" value="Eukaryota"/>
</dbReference>
<dbReference type="GeneTree" id="ENSGT00940000157079"/>
<dbReference type="HOGENOM" id="CLU_013230_1_0_1"/>
<dbReference type="InParanoid" id="Q0MW30"/>
<dbReference type="OMA" id="SHDNANF"/>
<dbReference type="OrthoDB" id="6078042at2759"/>
<dbReference type="PhylomeDB" id="Q0MW30"/>
<dbReference type="TreeFam" id="TF314368"/>
<dbReference type="UniPathway" id="UPA00143"/>
<dbReference type="BioGRID-ORCS" id="240055">
    <property type="hits" value="3 hits in 79 CRISPR screens"/>
</dbReference>
<dbReference type="ChiTaRS" id="Neurl1b">
    <property type="organism name" value="mouse"/>
</dbReference>
<dbReference type="PRO" id="PR:Q0MW30"/>
<dbReference type="Proteomes" id="UP000000589">
    <property type="component" value="Chromosome 17"/>
</dbReference>
<dbReference type="RNAct" id="Q0MW30">
    <property type="molecule type" value="protein"/>
</dbReference>
<dbReference type="Bgee" id="ENSMUSG00000034413">
    <property type="expression patterns" value="Expressed in ureter smooth muscle and 180 other cell types or tissues"/>
</dbReference>
<dbReference type="ExpressionAtlas" id="Q0MW30">
    <property type="expression patterns" value="baseline and differential"/>
</dbReference>
<dbReference type="GO" id="GO:0015629">
    <property type="term" value="C:actin cytoskeleton"/>
    <property type="evidence" value="ECO:0007669"/>
    <property type="project" value="Ensembl"/>
</dbReference>
<dbReference type="GO" id="GO:0005829">
    <property type="term" value="C:cytosol"/>
    <property type="evidence" value="ECO:0007669"/>
    <property type="project" value="Ensembl"/>
</dbReference>
<dbReference type="GO" id="GO:0005769">
    <property type="term" value="C:early endosome"/>
    <property type="evidence" value="ECO:0000314"/>
    <property type="project" value="UniProtKB"/>
</dbReference>
<dbReference type="GO" id="GO:0061630">
    <property type="term" value="F:ubiquitin protein ligase activity"/>
    <property type="evidence" value="ECO:0000314"/>
    <property type="project" value="UniProtKB"/>
</dbReference>
<dbReference type="GO" id="GO:0008270">
    <property type="term" value="F:zinc ion binding"/>
    <property type="evidence" value="ECO:0007669"/>
    <property type="project" value="UniProtKB-KW"/>
</dbReference>
<dbReference type="GO" id="GO:0007219">
    <property type="term" value="P:Notch signaling pathway"/>
    <property type="evidence" value="ECO:0007669"/>
    <property type="project" value="UniProtKB-KW"/>
</dbReference>
<dbReference type="GO" id="GO:0016567">
    <property type="term" value="P:protein ubiquitination"/>
    <property type="evidence" value="ECO:0007669"/>
    <property type="project" value="UniProtKB-UniPathway"/>
</dbReference>
<dbReference type="GO" id="GO:0070086">
    <property type="term" value="P:ubiquitin-dependent endocytosis"/>
    <property type="evidence" value="ECO:0000314"/>
    <property type="project" value="UniProtKB"/>
</dbReference>
<dbReference type="CDD" id="cd16786">
    <property type="entry name" value="mRING-HC-C3HC5_NEU1B"/>
    <property type="match status" value="1"/>
</dbReference>
<dbReference type="FunFam" id="2.60.120.920:FF:000005">
    <property type="entry name" value="Putative E3 ubiquitin-protein ligase NEURL1B"/>
    <property type="match status" value="1"/>
</dbReference>
<dbReference type="FunFam" id="2.60.120.920:FF:000020">
    <property type="entry name" value="Putative E3 ubiquitin-protein ligase NEURL1B"/>
    <property type="match status" value="1"/>
</dbReference>
<dbReference type="FunFam" id="3.30.40.10:FF:000056">
    <property type="entry name" value="Putative E3 ubiquitin-protein ligase NEURL1B"/>
    <property type="match status" value="1"/>
</dbReference>
<dbReference type="Gene3D" id="2.60.120.920">
    <property type="match status" value="2"/>
</dbReference>
<dbReference type="Gene3D" id="3.30.40.10">
    <property type="entry name" value="Zinc/RING finger domain, C3HC4 (zinc finger)"/>
    <property type="match status" value="1"/>
</dbReference>
<dbReference type="InterPro" id="IPR043136">
    <property type="entry name" value="B30.2/SPRY_sf"/>
</dbReference>
<dbReference type="InterPro" id="IPR037962">
    <property type="entry name" value="Neuralized"/>
</dbReference>
<dbReference type="InterPro" id="IPR006573">
    <property type="entry name" value="NHR_dom"/>
</dbReference>
<dbReference type="InterPro" id="IPR001841">
    <property type="entry name" value="Znf_RING"/>
</dbReference>
<dbReference type="InterPro" id="IPR013083">
    <property type="entry name" value="Znf_RING/FYVE/PHD"/>
</dbReference>
<dbReference type="PANTHER" id="PTHR12429:SF10">
    <property type="entry name" value="E3 UBIQUITIN-PROTEIN LIGASE NEURL1B"/>
    <property type="match status" value="1"/>
</dbReference>
<dbReference type="PANTHER" id="PTHR12429">
    <property type="entry name" value="NEURALIZED"/>
    <property type="match status" value="1"/>
</dbReference>
<dbReference type="Pfam" id="PF07177">
    <property type="entry name" value="Neuralized"/>
    <property type="match status" value="2"/>
</dbReference>
<dbReference type="Pfam" id="PF13920">
    <property type="entry name" value="zf-C3HC4_3"/>
    <property type="match status" value="1"/>
</dbReference>
<dbReference type="SMART" id="SM00588">
    <property type="entry name" value="NEUZ"/>
    <property type="match status" value="2"/>
</dbReference>
<dbReference type="SUPFAM" id="SSF57850">
    <property type="entry name" value="RING/U-box"/>
    <property type="match status" value="1"/>
</dbReference>
<dbReference type="PROSITE" id="PS51065">
    <property type="entry name" value="NHR"/>
    <property type="match status" value="2"/>
</dbReference>
<dbReference type="PROSITE" id="PS50089">
    <property type="entry name" value="ZF_RING_2"/>
    <property type="match status" value="1"/>
</dbReference>